<name>HA2B_MOUSE</name>
<dbReference type="EMBL" id="AF027865">
    <property type="protein sequence ID" value="AAB81529.1"/>
    <property type="molecule type" value="Genomic_DNA"/>
</dbReference>
<dbReference type="EMBL" id="AF050157">
    <property type="protein sequence ID" value="AAC05285.1"/>
    <property type="molecule type" value="Genomic_DNA"/>
</dbReference>
<dbReference type="EMBL" id="BC019721">
    <property type="protein sequence ID" value="AAH19721.1"/>
    <property type="molecule type" value="mRNA"/>
</dbReference>
<dbReference type="EMBL" id="BC031711">
    <property type="protein sequence ID" value="AAH31711.1"/>
    <property type="molecule type" value="mRNA"/>
</dbReference>
<dbReference type="EMBL" id="K01922">
    <property type="protein sequence ID" value="AAA39614.1"/>
    <property type="molecule type" value="mRNA"/>
</dbReference>
<dbReference type="CCDS" id="CCDS28645.1"/>
<dbReference type="RefSeq" id="NP_034508.2">
    <property type="nucleotide sequence ID" value="NM_010378.2"/>
</dbReference>
<dbReference type="PDB" id="1LNU">
    <property type="method" value="X-ray"/>
    <property type="resolution" value="2.50 A"/>
    <property type="chains" value="A/C/E/G=27-208"/>
</dbReference>
<dbReference type="PDB" id="1MUJ">
    <property type="method" value="X-ray"/>
    <property type="resolution" value="2.15 A"/>
    <property type="chains" value="A=24-205"/>
</dbReference>
<dbReference type="PDB" id="3C5Z">
    <property type="method" value="X-ray"/>
    <property type="resolution" value="2.55 A"/>
    <property type="chains" value="C/G=27-208"/>
</dbReference>
<dbReference type="PDB" id="3C60">
    <property type="method" value="X-ray"/>
    <property type="resolution" value="3.05 A"/>
    <property type="chains" value="C/G=27-208"/>
</dbReference>
<dbReference type="PDB" id="3C6L">
    <property type="method" value="X-ray"/>
    <property type="resolution" value="3.40 A"/>
    <property type="chains" value="C/G=27-208"/>
</dbReference>
<dbReference type="PDB" id="3RDT">
    <property type="method" value="X-ray"/>
    <property type="resolution" value="2.70 A"/>
    <property type="chains" value="C=27-208"/>
</dbReference>
<dbReference type="PDB" id="4P23">
    <property type="method" value="X-ray"/>
    <property type="resolution" value="2.25 A"/>
    <property type="chains" value="C=27-205"/>
</dbReference>
<dbReference type="PDB" id="4P46">
    <property type="method" value="X-ray"/>
    <property type="resolution" value="2.85 A"/>
    <property type="chains" value="C=27-205"/>
</dbReference>
<dbReference type="PDB" id="4P5T">
    <property type="method" value="X-ray"/>
    <property type="resolution" value="3.26 A"/>
    <property type="chains" value="C/G=27-208"/>
</dbReference>
<dbReference type="PDB" id="6MKD">
    <property type="method" value="X-ray"/>
    <property type="resolution" value="3.20 A"/>
    <property type="chains" value="C=27-205"/>
</dbReference>
<dbReference type="PDB" id="6MKR">
    <property type="method" value="X-ray"/>
    <property type="resolution" value="3.35 A"/>
    <property type="chains" value="C=27-205"/>
</dbReference>
<dbReference type="PDB" id="6MNG">
    <property type="method" value="X-ray"/>
    <property type="resolution" value="2.66 A"/>
    <property type="chains" value="C=27-205"/>
</dbReference>
<dbReference type="PDB" id="6MNM">
    <property type="method" value="X-ray"/>
    <property type="resolution" value="3.10 A"/>
    <property type="chains" value="C=27-205"/>
</dbReference>
<dbReference type="PDB" id="6MNN">
    <property type="method" value="X-ray"/>
    <property type="resolution" value="2.83 A"/>
    <property type="chains" value="C=27-205"/>
</dbReference>
<dbReference type="PDB" id="6MNO">
    <property type="method" value="X-ray"/>
    <property type="resolution" value="2.90 A"/>
    <property type="chains" value="C=27-205"/>
</dbReference>
<dbReference type="PDB" id="8RAL">
    <property type="method" value="X-ray"/>
    <property type="resolution" value="2.10 A"/>
    <property type="chains" value="A=24-218"/>
</dbReference>
<dbReference type="PDB" id="8VQ8">
    <property type="method" value="X-ray"/>
    <property type="resolution" value="2.01 A"/>
    <property type="chains" value="C=26-205"/>
</dbReference>
<dbReference type="PDB" id="9AUD">
    <property type="method" value="X-ray"/>
    <property type="resolution" value="2.90 A"/>
    <property type="chains" value="C=26-205"/>
</dbReference>
<dbReference type="PDB" id="9CYL">
    <property type="method" value="X-ray"/>
    <property type="resolution" value="4.66 A"/>
    <property type="chains" value="A=24-218"/>
</dbReference>
<dbReference type="PDB" id="9CYM">
    <property type="method" value="X-ray"/>
    <property type="resolution" value="3.84 A"/>
    <property type="chains" value="A=24-218"/>
</dbReference>
<dbReference type="PDBsum" id="1LNU"/>
<dbReference type="PDBsum" id="1MUJ"/>
<dbReference type="PDBsum" id="3C5Z"/>
<dbReference type="PDBsum" id="3C60"/>
<dbReference type="PDBsum" id="3C6L"/>
<dbReference type="PDBsum" id="3RDT"/>
<dbReference type="PDBsum" id="4P23"/>
<dbReference type="PDBsum" id="4P46"/>
<dbReference type="PDBsum" id="4P5T"/>
<dbReference type="PDBsum" id="6MKD"/>
<dbReference type="PDBsum" id="6MKR"/>
<dbReference type="PDBsum" id="6MNG"/>
<dbReference type="PDBsum" id="6MNM"/>
<dbReference type="PDBsum" id="6MNN"/>
<dbReference type="PDBsum" id="6MNO"/>
<dbReference type="PDBsum" id="8RAL"/>
<dbReference type="PDBsum" id="8VQ8"/>
<dbReference type="PDBsum" id="9AUD"/>
<dbReference type="PDBsum" id="9CYL"/>
<dbReference type="PDBsum" id="9CYM"/>
<dbReference type="SMR" id="P14434"/>
<dbReference type="BioGRID" id="200146">
    <property type="interactions" value="3"/>
</dbReference>
<dbReference type="IntAct" id="P14434">
    <property type="interactions" value="1"/>
</dbReference>
<dbReference type="MINT" id="P14434"/>
<dbReference type="STRING" id="10090.ENSMUSP00000046105"/>
<dbReference type="GlyCosmos" id="P14434">
    <property type="glycosylation" value="1 site, No reported glycans"/>
</dbReference>
<dbReference type="iPTMnet" id="P14434"/>
<dbReference type="PaxDb" id="10090-ENSMUSP00000046105"/>
<dbReference type="PeptideAtlas" id="P14434"/>
<dbReference type="ProteomicsDB" id="271385"/>
<dbReference type="DNASU" id="14960"/>
<dbReference type="Ensembl" id="ENSMUST00000040655.14">
    <property type="protein sequence ID" value="ENSMUSP00000046105.7"/>
    <property type="gene ID" value="ENSMUSG00000036594.16"/>
</dbReference>
<dbReference type="GeneID" id="14960"/>
<dbReference type="KEGG" id="mmu:14960"/>
<dbReference type="UCSC" id="uc008ccd.1">
    <property type="organism name" value="mouse"/>
</dbReference>
<dbReference type="AGR" id="MGI:95895"/>
<dbReference type="CTD" id="14960"/>
<dbReference type="MGI" id="MGI:95895">
    <property type="gene designation" value="H2-Aa"/>
</dbReference>
<dbReference type="VEuPathDB" id="HostDB:ENSMUSG00000036594"/>
<dbReference type="eggNOG" id="ENOG502RXYJ">
    <property type="taxonomic scope" value="Eukaryota"/>
</dbReference>
<dbReference type="GeneTree" id="ENSGT00940000161821"/>
<dbReference type="HOGENOM" id="CLU_069380_0_0_1"/>
<dbReference type="OMA" id="CPPIGEL"/>
<dbReference type="OrthoDB" id="8925804at2759"/>
<dbReference type="PhylomeDB" id="P14434"/>
<dbReference type="TreeFam" id="TF333797"/>
<dbReference type="BioGRID-ORCS" id="14960">
    <property type="hits" value="2 hits in 79 CRISPR screens"/>
</dbReference>
<dbReference type="ChiTaRS" id="H2-Aa">
    <property type="organism name" value="mouse"/>
</dbReference>
<dbReference type="EvolutionaryTrace" id="P14434"/>
<dbReference type="Proteomes" id="UP000000589">
    <property type="component" value="Chromosome 17"/>
</dbReference>
<dbReference type="Bgee" id="ENSMUSG00000036594">
    <property type="expression patterns" value="Expressed in spleen and 176 other cell types or tissues"/>
</dbReference>
<dbReference type="ExpressionAtlas" id="P14434">
    <property type="expression patterns" value="baseline and differential"/>
</dbReference>
<dbReference type="GO" id="GO:0009897">
    <property type="term" value="C:external side of plasma membrane"/>
    <property type="evidence" value="ECO:0000314"/>
    <property type="project" value="MGI"/>
</dbReference>
<dbReference type="GO" id="GO:0005764">
    <property type="term" value="C:lysosome"/>
    <property type="evidence" value="ECO:0000314"/>
    <property type="project" value="MGI"/>
</dbReference>
<dbReference type="GO" id="GO:0042613">
    <property type="term" value="C:MHC class II protein complex"/>
    <property type="evidence" value="ECO:0000314"/>
    <property type="project" value="MGI"/>
</dbReference>
<dbReference type="GO" id="GO:0005886">
    <property type="term" value="C:plasma membrane"/>
    <property type="evidence" value="ECO:0000314"/>
    <property type="project" value="MGI"/>
</dbReference>
<dbReference type="GO" id="GO:0042605">
    <property type="term" value="F:peptide antigen binding"/>
    <property type="evidence" value="ECO:0000314"/>
    <property type="project" value="MGI"/>
</dbReference>
<dbReference type="GO" id="GO:0002250">
    <property type="term" value="P:adaptive immune response"/>
    <property type="evidence" value="ECO:0007669"/>
    <property type="project" value="UniProtKB-KW"/>
</dbReference>
<dbReference type="GO" id="GO:0019882">
    <property type="term" value="P:antigen processing and presentation"/>
    <property type="evidence" value="ECO:0000314"/>
    <property type="project" value="MGI"/>
</dbReference>
<dbReference type="GO" id="GO:0019886">
    <property type="term" value="P:antigen processing and presentation of exogenous peptide antigen via MHC class II"/>
    <property type="evidence" value="ECO:0000314"/>
    <property type="project" value="MGI"/>
</dbReference>
<dbReference type="GO" id="GO:0048002">
    <property type="term" value="P:antigen processing and presentation of peptide antigen"/>
    <property type="evidence" value="ECO:0000314"/>
    <property type="project" value="MGI"/>
</dbReference>
<dbReference type="GO" id="GO:0045582">
    <property type="term" value="P:positive regulation of T cell differentiation"/>
    <property type="evidence" value="ECO:0000314"/>
    <property type="project" value="MGI"/>
</dbReference>
<dbReference type="GO" id="GO:0034341">
    <property type="term" value="P:response to type II interferon"/>
    <property type="evidence" value="ECO:0000314"/>
    <property type="project" value="BHF-UCL"/>
</dbReference>
<dbReference type="CDD" id="cd21006">
    <property type="entry name" value="IgC1_MHC_II_alpha_I-A"/>
    <property type="match status" value="1"/>
</dbReference>
<dbReference type="FunFam" id="2.60.40.10:FF:000280">
    <property type="entry name" value="HLA class II histocompatibility antigen, DR alpha chain"/>
    <property type="match status" value="1"/>
</dbReference>
<dbReference type="FunFam" id="3.10.320.10:FF:000002">
    <property type="entry name" value="HLA class II histocompatibility antigen, DR alpha chain"/>
    <property type="match status" value="1"/>
</dbReference>
<dbReference type="Gene3D" id="3.10.320.10">
    <property type="entry name" value="Class II Histocompatibility Antigen, M Beta Chain, Chain B, domain 1"/>
    <property type="match status" value="1"/>
</dbReference>
<dbReference type="Gene3D" id="2.60.40.10">
    <property type="entry name" value="Immunoglobulins"/>
    <property type="match status" value="1"/>
</dbReference>
<dbReference type="InterPro" id="IPR007110">
    <property type="entry name" value="Ig-like_dom"/>
</dbReference>
<dbReference type="InterPro" id="IPR036179">
    <property type="entry name" value="Ig-like_dom_sf"/>
</dbReference>
<dbReference type="InterPro" id="IPR013783">
    <property type="entry name" value="Ig-like_fold"/>
</dbReference>
<dbReference type="InterPro" id="IPR003006">
    <property type="entry name" value="Ig/MHC_CS"/>
</dbReference>
<dbReference type="InterPro" id="IPR003597">
    <property type="entry name" value="Ig_C1-set"/>
</dbReference>
<dbReference type="InterPro" id="IPR050160">
    <property type="entry name" value="MHC/Immunoglobulin"/>
</dbReference>
<dbReference type="InterPro" id="IPR011162">
    <property type="entry name" value="MHC_I/II-like_Ag-recog"/>
</dbReference>
<dbReference type="InterPro" id="IPR014745">
    <property type="entry name" value="MHC_II_a/b_N"/>
</dbReference>
<dbReference type="InterPro" id="IPR001003">
    <property type="entry name" value="MHC_II_a_N"/>
</dbReference>
<dbReference type="PANTHER" id="PTHR19944:SF59">
    <property type="entry name" value="HLA CLASS II HISTOCOMPATIBILITY ANTIGEN, DQ ALPHA 1 CHAIN"/>
    <property type="match status" value="1"/>
</dbReference>
<dbReference type="PANTHER" id="PTHR19944">
    <property type="entry name" value="MHC CLASS II-RELATED"/>
    <property type="match status" value="1"/>
</dbReference>
<dbReference type="Pfam" id="PF07654">
    <property type="entry name" value="C1-set"/>
    <property type="match status" value="1"/>
</dbReference>
<dbReference type="Pfam" id="PF00993">
    <property type="entry name" value="MHC_II_alpha"/>
    <property type="match status" value="1"/>
</dbReference>
<dbReference type="SMART" id="SM00407">
    <property type="entry name" value="IGc1"/>
    <property type="match status" value="1"/>
</dbReference>
<dbReference type="SMART" id="SM00920">
    <property type="entry name" value="MHC_II_alpha"/>
    <property type="match status" value="1"/>
</dbReference>
<dbReference type="SUPFAM" id="SSF48726">
    <property type="entry name" value="Immunoglobulin"/>
    <property type="match status" value="1"/>
</dbReference>
<dbReference type="SUPFAM" id="SSF54452">
    <property type="entry name" value="MHC antigen-recognition domain"/>
    <property type="match status" value="1"/>
</dbReference>
<dbReference type="PROSITE" id="PS50835">
    <property type="entry name" value="IG_LIKE"/>
    <property type="match status" value="1"/>
</dbReference>
<dbReference type="PROSITE" id="PS00290">
    <property type="entry name" value="IG_MHC"/>
    <property type="match status" value="1"/>
</dbReference>
<gene>
    <name type="primary">H2-Aa</name>
</gene>
<reference key="1">
    <citation type="submission" date="1997-10" db="EMBL/GenBank/DDBJ databases">
        <title>Sequence of the mouse major histocompatibility locus class II region.</title>
        <authorList>
            <person name="Rowen L."/>
            <person name="Qin S."/>
            <person name="Ahearn M.E."/>
            <person name="Loretz C."/>
            <person name="Faust J."/>
            <person name="Lasky S."/>
            <person name="Mahairas G."/>
            <person name="Hood L.E."/>
        </authorList>
    </citation>
    <scope>NUCLEOTIDE SEQUENCE</scope>
</reference>
<reference key="2">
    <citation type="submission" date="1998-02" db="EMBL/GenBank/DDBJ databases">
        <title>Sequence of the mouse major histocompatibility class II region.</title>
        <authorList>
            <person name="Rowen L."/>
            <person name="Qin S."/>
            <person name="Loretz C."/>
            <person name="Mix L."/>
            <person name="Lasky S."/>
            <person name="Madan A."/>
            <person name="Hood L.E."/>
        </authorList>
    </citation>
    <scope>NUCLEOTIDE SEQUENCE</scope>
</reference>
<reference key="3">
    <citation type="journal article" date="2004" name="Genome Res.">
        <title>The status, quality, and expansion of the NIH full-length cDNA project: the Mammalian Gene Collection (MGC).</title>
        <authorList>
            <consortium name="The MGC Project Team"/>
        </authorList>
    </citation>
    <scope>NUCLEOTIDE SEQUENCE [LARGE SCALE MRNA]</scope>
    <source>
        <strain>C57BL/6J</strain>
        <tissue>Mammary gland</tissue>
    </source>
</reference>
<reference key="4">
    <citation type="journal article" date="1983" name="Cell">
        <title>Regions of allelic hypervariability in the murine A alpha immune response gene.</title>
        <authorList>
            <person name="Benoist C.O."/>
            <person name="Mathis D.J."/>
            <person name="Kanter M.R."/>
            <person name="Williams V.E."/>
            <person name="McDevitt H.O."/>
        </authorList>
    </citation>
    <scope>NUCLEOTIDE SEQUENCE [MRNA] OF 9-256</scope>
</reference>
<reference key="5">
    <citation type="journal article" date="2010" name="Cell">
        <title>A tissue-specific atlas of mouse protein phosphorylation and expression.</title>
        <authorList>
            <person name="Huttlin E.L."/>
            <person name="Jedrychowski M.P."/>
            <person name="Elias J.E."/>
            <person name="Goswami T."/>
            <person name="Rad R."/>
            <person name="Beausoleil S.A."/>
            <person name="Villen J."/>
            <person name="Haas W."/>
            <person name="Sowa M.E."/>
            <person name="Gygi S.P."/>
        </authorList>
    </citation>
    <scope>IDENTIFICATION BY MASS SPECTROMETRY [LARGE SCALE ANALYSIS]</scope>
    <source>
        <tissue>Heart</tissue>
        <tissue>Kidney</tissue>
        <tissue>Lung</tissue>
        <tissue>Spleen</tissue>
    </source>
</reference>
<reference key="6">
    <citation type="journal article" date="2003" name="J. Mol. Biol.">
        <title>Crystal structure of MHC class II I-Ab in complex with a human CLIP peptide: prediction of an I-Ab peptide-binding motif.</title>
        <authorList>
            <person name="Zhu Y."/>
            <person name="Rudensky A.Y."/>
            <person name="Corper A.L."/>
            <person name="Teyton L."/>
            <person name="Wilson I.A."/>
        </authorList>
    </citation>
    <scope>X-RAY CRYSTALLOGRAPHY (2.15 ANGSTROMS) OF 24-205 IN COMPLEX WITH HUMAN CLIP PEPTIDE</scope>
    <scope>GLYCOSYLATION AT ASN-145</scope>
    <scope>DISULFIDE BONDS</scope>
</reference>
<sequence length="256" mass="28093">MPRSRALILGVLALTTMLSLCGGEDDIEADHVGTYGISVYQSPGDIGQYTFEFDGDELFYVDLDKKETVWMLPEFGQLASFDPQGGLQNIAVVKHNLGVLTKRSNSTPATNEAPQATVFPKSPVLLGQPNTLICFVDNIFPPVINITWLRNSKSVADGVYETSFFVNRDYSFHKLSYLTFIPSDDDIYDCKVEHWGLEEPVLKHWEPEIPAPMSELTETVVCALGLSVGLVGIVVGTIFIIQGLRSGGTSRHPGPL</sequence>
<accession>P14434</accession>
<accession>O78195</accession>
<feature type="signal peptide" evidence="1">
    <location>
        <begin position="1"/>
        <end position="23"/>
    </location>
</feature>
<feature type="chain" id="PRO_0000018975" description="H-2 class II histocompatibility antigen, A-B alpha chain">
    <location>
        <begin position="24"/>
        <end position="256"/>
    </location>
</feature>
<feature type="topological domain" description="Extracellular" evidence="1">
    <location>
        <begin position="24"/>
        <end position="218"/>
    </location>
</feature>
<feature type="transmembrane region" description="Helical" evidence="1">
    <location>
        <begin position="219"/>
        <end position="244"/>
    </location>
</feature>
<feature type="topological domain" description="Cytoplasmic" evidence="1">
    <location>
        <begin position="245"/>
        <end position="256"/>
    </location>
</feature>
<feature type="domain" description="Ig-like C1-type">
    <location>
        <begin position="114"/>
        <end position="206"/>
    </location>
</feature>
<feature type="region of interest" description="Alpha-1">
    <location>
        <begin position="24"/>
        <end position="111"/>
    </location>
</feature>
<feature type="region of interest" description="Alpha-2">
    <location>
        <begin position="112"/>
        <end position="205"/>
    </location>
</feature>
<feature type="region of interest" description="Connecting peptide">
    <location>
        <begin position="206"/>
        <end position="218"/>
    </location>
</feature>
<feature type="glycosylation site" description="N-linked (GlcNAc...) asparagine" evidence="3">
    <location>
        <position position="145"/>
    </location>
</feature>
<feature type="disulfide bond" evidence="2 3">
    <location>
        <begin position="134"/>
        <end position="190"/>
    </location>
</feature>
<feature type="strand" evidence="9">
    <location>
        <begin position="30"/>
        <end position="42"/>
    </location>
</feature>
<feature type="turn" evidence="9">
    <location>
        <begin position="43"/>
        <end position="45"/>
    </location>
</feature>
<feature type="strand" evidence="9">
    <location>
        <begin position="46"/>
        <end position="53"/>
    </location>
</feature>
<feature type="strand" evidence="9">
    <location>
        <begin position="56"/>
        <end position="62"/>
    </location>
</feature>
<feature type="turn" evidence="9">
    <location>
        <begin position="63"/>
        <end position="66"/>
    </location>
</feature>
<feature type="strand" evidence="9">
    <location>
        <begin position="67"/>
        <end position="72"/>
    </location>
</feature>
<feature type="helix" evidence="9">
    <location>
        <begin position="73"/>
        <end position="77"/>
    </location>
</feature>
<feature type="helix" evidence="9">
    <location>
        <begin position="84"/>
        <end position="103"/>
    </location>
</feature>
<feature type="turn" evidence="5">
    <location>
        <begin position="104"/>
        <end position="106"/>
    </location>
</feature>
<feature type="strand" evidence="9">
    <location>
        <begin position="115"/>
        <end position="122"/>
    </location>
</feature>
<feature type="strand" evidence="6">
    <location>
        <begin position="126"/>
        <end position="128"/>
    </location>
</feature>
<feature type="strand" evidence="9">
    <location>
        <begin position="130"/>
        <end position="139"/>
    </location>
</feature>
<feature type="strand" evidence="9">
    <location>
        <begin position="145"/>
        <end position="150"/>
    </location>
</feature>
<feature type="strand" evidence="8">
    <location>
        <begin position="153"/>
        <end position="155"/>
    </location>
</feature>
<feature type="strand" evidence="9">
    <location>
        <begin position="159"/>
        <end position="161"/>
    </location>
</feature>
<feature type="strand" evidence="7">
    <location>
        <begin position="165"/>
        <end position="167"/>
    </location>
</feature>
<feature type="turn" evidence="7">
    <location>
        <begin position="168"/>
        <end position="170"/>
    </location>
</feature>
<feature type="strand" evidence="9">
    <location>
        <begin position="172"/>
        <end position="180"/>
    </location>
</feature>
<feature type="strand" evidence="9">
    <location>
        <begin position="188"/>
        <end position="193"/>
    </location>
</feature>
<feature type="strand" evidence="9">
    <location>
        <begin position="197"/>
        <end position="199"/>
    </location>
</feature>
<feature type="strand" evidence="9">
    <location>
        <begin position="201"/>
        <end position="205"/>
    </location>
</feature>
<evidence type="ECO:0000255" key="1"/>
<evidence type="ECO:0000255" key="2">
    <source>
        <dbReference type="PROSITE-ProRule" id="PRU00114"/>
    </source>
</evidence>
<evidence type="ECO:0000269" key="3">
    <source>
    </source>
</evidence>
<evidence type="ECO:0000305" key="4"/>
<evidence type="ECO:0007829" key="5">
    <source>
        <dbReference type="PDB" id="1LNU"/>
    </source>
</evidence>
<evidence type="ECO:0007829" key="6">
    <source>
        <dbReference type="PDB" id="3C5Z"/>
    </source>
</evidence>
<evidence type="ECO:0007829" key="7">
    <source>
        <dbReference type="PDB" id="3C6L"/>
    </source>
</evidence>
<evidence type="ECO:0007829" key="8">
    <source>
        <dbReference type="PDB" id="4P23"/>
    </source>
</evidence>
<evidence type="ECO:0007829" key="9">
    <source>
        <dbReference type="PDB" id="8RAL"/>
    </source>
</evidence>
<organism>
    <name type="scientific">Mus musculus</name>
    <name type="common">Mouse</name>
    <dbReference type="NCBI Taxonomy" id="10090"/>
    <lineage>
        <taxon>Eukaryota</taxon>
        <taxon>Metazoa</taxon>
        <taxon>Chordata</taxon>
        <taxon>Craniata</taxon>
        <taxon>Vertebrata</taxon>
        <taxon>Euteleostomi</taxon>
        <taxon>Mammalia</taxon>
        <taxon>Eutheria</taxon>
        <taxon>Euarchontoglires</taxon>
        <taxon>Glires</taxon>
        <taxon>Rodentia</taxon>
        <taxon>Myomorpha</taxon>
        <taxon>Muroidea</taxon>
        <taxon>Muridae</taxon>
        <taxon>Murinae</taxon>
        <taxon>Mus</taxon>
        <taxon>Mus</taxon>
    </lineage>
</organism>
<comment type="subcellular location">
    <subcellularLocation>
        <location evidence="4">Membrane</location>
        <topology evidence="4">Single-pass type I membrane protein</topology>
    </subcellularLocation>
</comment>
<comment type="similarity">
    <text evidence="4">Belongs to the MHC class II family.</text>
</comment>
<protein>
    <recommendedName>
        <fullName>H-2 class II histocompatibility antigen, A-B alpha chain</fullName>
        <shortName>IAalpha</shortName>
    </recommendedName>
</protein>
<proteinExistence type="evidence at protein level"/>
<keyword id="KW-0002">3D-structure</keyword>
<keyword id="KW-1064">Adaptive immunity</keyword>
<keyword id="KW-1015">Disulfide bond</keyword>
<keyword id="KW-0325">Glycoprotein</keyword>
<keyword id="KW-0391">Immunity</keyword>
<keyword id="KW-0472">Membrane</keyword>
<keyword id="KW-0491">MHC II</keyword>
<keyword id="KW-1185">Reference proteome</keyword>
<keyword id="KW-0732">Signal</keyword>
<keyword id="KW-0812">Transmembrane</keyword>
<keyword id="KW-1133">Transmembrane helix</keyword>